<dbReference type="EC" id="2.3.1.-"/>
<dbReference type="EMBL" id="AAFI02000006">
    <property type="protein sequence ID" value="EAL71629.1"/>
    <property type="molecule type" value="Genomic_DNA"/>
</dbReference>
<dbReference type="EMBL" id="AAFI02000169">
    <property type="protein sequence ID" value="EDR41033.1"/>
    <property type="molecule type" value="Genomic_DNA"/>
</dbReference>
<dbReference type="RefSeq" id="XP_001733037.1">
    <property type="nucleotide sequence ID" value="XM_001732985.1"/>
</dbReference>
<dbReference type="RefSeq" id="XP_645569.1">
    <property type="nucleotide sequence ID" value="XM_640477.1"/>
</dbReference>
<dbReference type="SMR" id="Q86AE3"/>
<dbReference type="FunCoup" id="Q86AE3">
    <property type="interactions" value="5"/>
</dbReference>
<dbReference type="STRING" id="44689.Q86AE3"/>
<dbReference type="GlyGen" id="Q86AE3">
    <property type="glycosylation" value="1 site"/>
</dbReference>
<dbReference type="PaxDb" id="44689-DDB0231390"/>
<dbReference type="EnsemblProtists" id="EAL71629">
    <property type="protein sequence ID" value="EAL71629"/>
    <property type="gene ID" value="DDB_G0271530"/>
</dbReference>
<dbReference type="EnsemblProtists" id="EDR41033">
    <property type="protein sequence ID" value="EDR41033"/>
    <property type="gene ID" value="DDB_G0295659"/>
</dbReference>
<dbReference type="GeneID" id="8618022"/>
<dbReference type="GeneID" id="8627807"/>
<dbReference type="KEGG" id="ddi:DDB_G0271530"/>
<dbReference type="KEGG" id="ddi:DDB_G0295659"/>
<dbReference type="dictyBase" id="DDB_G0295659">
    <property type="gene designation" value="pks36"/>
</dbReference>
<dbReference type="dictyBase" id="DDB_G0271530">
    <property type="gene designation" value="pks9"/>
</dbReference>
<dbReference type="VEuPathDB" id="AmoebaDB:DDB_G0295659"/>
<dbReference type="eggNOG" id="KOG1202">
    <property type="taxonomic scope" value="Eukaryota"/>
</dbReference>
<dbReference type="eggNOG" id="KOG1221">
    <property type="taxonomic scope" value="Eukaryota"/>
</dbReference>
<dbReference type="HOGENOM" id="CLU_000022_31_0_1"/>
<dbReference type="InParanoid" id="Q86AE3"/>
<dbReference type="PhylomeDB" id="Q86AE3"/>
<dbReference type="PRO" id="PR:Q86AE3"/>
<dbReference type="Proteomes" id="UP000002195">
    <property type="component" value="Chromosome 2"/>
</dbReference>
<dbReference type="Proteomes" id="UP000002195">
    <property type="component" value="Chromosome 5"/>
</dbReference>
<dbReference type="GO" id="GO:0016020">
    <property type="term" value="C:membrane"/>
    <property type="evidence" value="ECO:0007669"/>
    <property type="project" value="UniProtKB-SubCell"/>
</dbReference>
<dbReference type="GO" id="GO:0004315">
    <property type="term" value="F:3-oxoacyl-[acyl-carrier-protein] synthase activity"/>
    <property type="evidence" value="ECO:0007669"/>
    <property type="project" value="InterPro"/>
</dbReference>
<dbReference type="GO" id="GO:0016491">
    <property type="term" value="F:oxidoreductase activity"/>
    <property type="evidence" value="ECO:0007669"/>
    <property type="project" value="InterPro"/>
</dbReference>
<dbReference type="GO" id="GO:0006633">
    <property type="term" value="P:fatty acid biosynthetic process"/>
    <property type="evidence" value="ECO:0000318"/>
    <property type="project" value="GO_Central"/>
</dbReference>
<dbReference type="CDD" id="cd08954">
    <property type="entry name" value="KR_1_FAS_SDR_x"/>
    <property type="match status" value="1"/>
</dbReference>
<dbReference type="CDD" id="cd00833">
    <property type="entry name" value="PKS"/>
    <property type="match status" value="1"/>
</dbReference>
<dbReference type="CDD" id="cd05235">
    <property type="entry name" value="SDR_e1"/>
    <property type="match status" value="1"/>
</dbReference>
<dbReference type="Gene3D" id="3.40.47.10">
    <property type="match status" value="1"/>
</dbReference>
<dbReference type="Gene3D" id="1.10.1200.10">
    <property type="entry name" value="ACP-like"/>
    <property type="match status" value="1"/>
</dbReference>
<dbReference type="Gene3D" id="3.40.366.10">
    <property type="entry name" value="Malonyl-Coenzyme A Acyl Carrier Protein, domain 2"/>
    <property type="match status" value="1"/>
</dbReference>
<dbReference type="Gene3D" id="3.90.180.10">
    <property type="entry name" value="Medium-chain alcohol dehydrogenases, catalytic domain"/>
    <property type="match status" value="1"/>
</dbReference>
<dbReference type="Gene3D" id="3.40.50.720">
    <property type="entry name" value="NAD(P)-binding Rossmann-like Domain"/>
    <property type="match status" value="3"/>
</dbReference>
<dbReference type="Gene3D" id="3.10.129.110">
    <property type="entry name" value="Polyketide synthase dehydratase"/>
    <property type="match status" value="1"/>
</dbReference>
<dbReference type="Gene3D" id="3.40.50.150">
    <property type="entry name" value="Vaccinia Virus protein VP39"/>
    <property type="match status" value="1"/>
</dbReference>
<dbReference type="InterPro" id="IPR001227">
    <property type="entry name" value="Ac_transferase_dom_sf"/>
</dbReference>
<dbReference type="InterPro" id="IPR036736">
    <property type="entry name" value="ACP-like_sf"/>
</dbReference>
<dbReference type="InterPro" id="IPR014043">
    <property type="entry name" value="Acyl_transferase_dom"/>
</dbReference>
<dbReference type="InterPro" id="IPR016035">
    <property type="entry name" value="Acyl_Trfase/lysoPLipase"/>
</dbReference>
<dbReference type="InterPro" id="IPR013154">
    <property type="entry name" value="ADH-like_N"/>
</dbReference>
<dbReference type="InterPro" id="IPR013120">
    <property type="entry name" value="Far_NAD-bd"/>
</dbReference>
<dbReference type="InterPro" id="IPR011032">
    <property type="entry name" value="GroES-like_sf"/>
</dbReference>
<dbReference type="InterPro" id="IPR018201">
    <property type="entry name" value="Ketoacyl_synth_AS"/>
</dbReference>
<dbReference type="InterPro" id="IPR014031">
    <property type="entry name" value="Ketoacyl_synth_C"/>
</dbReference>
<dbReference type="InterPro" id="IPR014030">
    <property type="entry name" value="Ketoacyl_synth_N"/>
</dbReference>
<dbReference type="InterPro" id="IPR016036">
    <property type="entry name" value="Malonyl_transacylase_ACP-bd"/>
</dbReference>
<dbReference type="InterPro" id="IPR013217">
    <property type="entry name" value="Methyltransf_12"/>
</dbReference>
<dbReference type="InterPro" id="IPR036291">
    <property type="entry name" value="NAD(P)-bd_dom_sf"/>
</dbReference>
<dbReference type="InterPro" id="IPR032821">
    <property type="entry name" value="PKS_assoc"/>
</dbReference>
<dbReference type="InterPro" id="IPR020841">
    <property type="entry name" value="PKS_Beta-ketoAc_synthase_dom"/>
</dbReference>
<dbReference type="InterPro" id="IPR042104">
    <property type="entry name" value="PKS_dehydratase_sf"/>
</dbReference>
<dbReference type="InterPro" id="IPR020843">
    <property type="entry name" value="PKS_ER"/>
</dbReference>
<dbReference type="InterPro" id="IPR013968">
    <property type="entry name" value="PKS_KR"/>
</dbReference>
<dbReference type="InterPro" id="IPR049900">
    <property type="entry name" value="PKS_mFAS_DH"/>
</dbReference>
<dbReference type="InterPro" id="IPR050444">
    <property type="entry name" value="Polyketide_Synthase"/>
</dbReference>
<dbReference type="InterPro" id="IPR009081">
    <property type="entry name" value="PP-bd_ACP"/>
</dbReference>
<dbReference type="InterPro" id="IPR029063">
    <property type="entry name" value="SAM-dependent_MTases_sf"/>
</dbReference>
<dbReference type="InterPro" id="IPR010080">
    <property type="entry name" value="Thioester_reductase-like_dom"/>
</dbReference>
<dbReference type="InterPro" id="IPR016039">
    <property type="entry name" value="Thiolase-like"/>
</dbReference>
<dbReference type="PANTHER" id="PTHR45681:SF7">
    <property type="entry name" value="POLYKETIDE SYNTHASE 13-RELATED"/>
    <property type="match status" value="1"/>
</dbReference>
<dbReference type="PANTHER" id="PTHR45681">
    <property type="entry name" value="POLYKETIDE SYNTHASE 44-RELATED"/>
    <property type="match status" value="1"/>
</dbReference>
<dbReference type="Pfam" id="PF23297">
    <property type="entry name" value="ACP_SdgA_C"/>
    <property type="match status" value="1"/>
</dbReference>
<dbReference type="Pfam" id="PF00698">
    <property type="entry name" value="Acyl_transf_1"/>
    <property type="match status" value="1"/>
</dbReference>
<dbReference type="Pfam" id="PF08240">
    <property type="entry name" value="ADH_N"/>
    <property type="match status" value="1"/>
</dbReference>
<dbReference type="Pfam" id="PF16197">
    <property type="entry name" value="KAsynt_C_assoc"/>
    <property type="match status" value="1"/>
</dbReference>
<dbReference type="Pfam" id="PF00109">
    <property type="entry name" value="ketoacyl-synt"/>
    <property type="match status" value="1"/>
</dbReference>
<dbReference type="Pfam" id="PF02801">
    <property type="entry name" value="Ketoacyl-synt_C"/>
    <property type="match status" value="1"/>
</dbReference>
<dbReference type="Pfam" id="PF08659">
    <property type="entry name" value="KR"/>
    <property type="match status" value="1"/>
</dbReference>
<dbReference type="Pfam" id="PF08242">
    <property type="entry name" value="Methyltransf_12"/>
    <property type="match status" value="1"/>
</dbReference>
<dbReference type="Pfam" id="PF07993">
    <property type="entry name" value="NAD_binding_4"/>
    <property type="match status" value="1"/>
</dbReference>
<dbReference type="SMART" id="SM00827">
    <property type="entry name" value="PKS_AT"/>
    <property type="match status" value="1"/>
</dbReference>
<dbReference type="SMART" id="SM00829">
    <property type="entry name" value="PKS_ER"/>
    <property type="match status" value="1"/>
</dbReference>
<dbReference type="SMART" id="SM00822">
    <property type="entry name" value="PKS_KR"/>
    <property type="match status" value="1"/>
</dbReference>
<dbReference type="SMART" id="SM00825">
    <property type="entry name" value="PKS_KS"/>
    <property type="match status" value="1"/>
</dbReference>
<dbReference type="SUPFAM" id="SSF47336">
    <property type="entry name" value="ACP-like"/>
    <property type="match status" value="1"/>
</dbReference>
<dbReference type="SUPFAM" id="SSF52151">
    <property type="entry name" value="FabD/lysophospholipase-like"/>
    <property type="match status" value="1"/>
</dbReference>
<dbReference type="SUPFAM" id="SSF50129">
    <property type="entry name" value="GroES-like"/>
    <property type="match status" value="1"/>
</dbReference>
<dbReference type="SUPFAM" id="SSF51735">
    <property type="entry name" value="NAD(P)-binding Rossmann-fold domains"/>
    <property type="match status" value="3"/>
</dbReference>
<dbReference type="SUPFAM" id="SSF55048">
    <property type="entry name" value="Probable ACP-binding domain of malonyl-CoA ACP transacylase"/>
    <property type="match status" value="1"/>
</dbReference>
<dbReference type="SUPFAM" id="SSF53335">
    <property type="entry name" value="S-adenosyl-L-methionine-dependent methyltransferases"/>
    <property type="match status" value="1"/>
</dbReference>
<dbReference type="SUPFAM" id="SSF53901">
    <property type="entry name" value="Thiolase-like"/>
    <property type="match status" value="1"/>
</dbReference>
<dbReference type="PROSITE" id="PS50075">
    <property type="entry name" value="CARRIER"/>
    <property type="match status" value="1"/>
</dbReference>
<dbReference type="PROSITE" id="PS00606">
    <property type="entry name" value="KS3_1"/>
    <property type="match status" value="1"/>
</dbReference>
<dbReference type="PROSITE" id="PS52004">
    <property type="entry name" value="KS3_2"/>
    <property type="match status" value="1"/>
</dbReference>
<dbReference type="PROSITE" id="PS52019">
    <property type="entry name" value="PKS_MFAS_DH"/>
    <property type="match status" value="1"/>
</dbReference>
<feature type="chain" id="PRO_0000376884" description="Probable polyketide synthase 9/36">
    <location>
        <begin position="1"/>
        <end position="2931"/>
    </location>
</feature>
<feature type="transmembrane region" description="Helical" evidence="2">
    <location>
        <begin position="2293"/>
        <end position="2313"/>
    </location>
</feature>
<feature type="transmembrane region" description="Helical" evidence="2">
    <location>
        <begin position="2553"/>
        <end position="2573"/>
    </location>
</feature>
<feature type="domain" description="Ketosynthase family 3 (KS3)" evidence="4">
    <location>
        <begin position="11"/>
        <end position="442"/>
    </location>
</feature>
<feature type="domain" description="PKS/mFAS DH" evidence="5">
    <location>
        <begin position="925"/>
        <end position="1209"/>
    </location>
</feature>
<feature type="domain" description="Carrier" evidence="3">
    <location>
        <begin position="2429"/>
        <end position="2506"/>
    </location>
</feature>
<feature type="region of interest" description="Acyl/malonyl transferase">
    <location>
        <begin position="635"/>
        <end position="668"/>
    </location>
</feature>
<feature type="region of interest" description="N-terminal hotdog fold" evidence="5">
    <location>
        <begin position="925"/>
        <end position="1047"/>
    </location>
</feature>
<feature type="region of interest" description="C-terminal hotdog fold" evidence="5">
    <location>
        <begin position="1064"/>
        <end position="1209"/>
    </location>
</feature>
<feature type="active site" description="For beta-ketoacyl synthase activity" evidence="4">
    <location>
        <position position="181"/>
    </location>
</feature>
<feature type="active site" description="For beta-ketoacyl synthase activity" evidence="4">
    <location>
        <position position="323"/>
    </location>
</feature>
<feature type="active site" description="For beta-ketoacyl synthase activity" evidence="4">
    <location>
        <position position="362"/>
    </location>
</feature>
<feature type="active site" description="For acyl/malonyl transferase activity" evidence="6">
    <location>
        <position position="645"/>
    </location>
</feature>
<feature type="active site" description="Proton acceptor; for dehydratase activity" evidence="5">
    <location>
        <position position="959"/>
    </location>
</feature>
<feature type="active site" description="Proton donor; for dehydratase activity" evidence="5">
    <location>
        <position position="1122"/>
    </location>
</feature>
<feature type="modified residue" description="O-(pantetheine 4'-phosphoryl)serine" evidence="3">
    <location>
        <position position="2466"/>
    </location>
</feature>
<proteinExistence type="evidence at transcript level"/>
<gene>
    <name type="primary">pks9</name>
    <name type="ORF">DDB_G0271530</name>
</gene>
<gene>
    <name type="primary">pks36</name>
    <name type="ORF">DDB_G0295659</name>
</gene>
<sequence>MGNLKNINLKEKGVAIVGIGFRIPSGNNENSISSPDDLFNNLKNGFDGVSSTSERWSDNFHKLGEISSPNAGLLPFKEWKSFDPLFFGINPSEAPLIDPQQRLLLKCTWEALEDASIDPISIRGTNTSVFIGSSTIDYLHTNKHQDSVLKNAIAQSTSAISNRISYCFDFNGPSLSIDTACSSSLNAVSQGYHSILNGTSNMSIVGGVNLILDVDIIKAYSILSMLSKTHGKCKTFDESGDGFTRGECVGVVVLKNLQDAVKDGNRIYCVINGSSSNVDGNGNMDKVNFYSPSKQSQFNNINSAFKSTNDKLSINDIQYIEAHGTGTKTGDPIETEAISMAFKNRDKSTPILIGSIKSNIGHCEAGSGVASLIKCCLMFKYQCFLPNIHFKNPNPLIKFNEWNLKVVTSPIPFNKRNNEKPVSMMINNFGVTGSNCCLLISEFKNNNNFKENINLESQSVNDRVLIPFSANSSNSLNQYQSKFKNIINNQFNFIDFTANQIYSKSNFLYQRSVVIASNSNELFENISNKKQIQTKNSIISNMSFKGKNPITIFVFSGQGSQYPKMALELYNNEVIFKKSIDLIDSKLSKYYGFSVWEKVKTIKDDDLTSIHDPIFAQPALCMISVSLFELYYHWGVNPSFILGHSLGEISASYCSGMIDLDTFCYTVYQRSIAQSKTNGCGRMLSINISDEEFKSMYSQKYPQIEIACYNSPQSIVVAGNESILNEISKELKEKEIFTTMLGSLSSFHTSSQQCTKDSILQLNIESNQPKVPIFSTVTTNLFNESNRFNSQYVYDNIIKPVKFTQTISNIYKHIESNQLNNEIVFIEIAPHPTLLFYIKQMVPSSLNESVSVYSALHKKKNDVEEFQQTISNLYCQNGYNINFKCQFNNKKSNQSINLPLYQWDEELYFTQAQTLEQHRKEGPPIDHLGTSNSYNSPFNNSYRTSIDIKNKPFLYLKGHMVKGKYYFPGCGYIDNIIQLYKNQDIFISFIEFKTPLILIEGINQYLQTNIQQTGKSEYRAQFHFKDQKSNEWIQSSNANFQLLDHGNDIPPKYNIKEIIENKCNLSKLTKNELYTHIKSKTGLNYTGVFQGVTECYIGGDCTLSVVSLESQTNSFLNIPILDTCLHGMIGLSNDQCQIVFDKAIGFKYYSSNIPANLKDYKDSVYVYSHLKSKSVDSFFGSIIVMLSDGSVLYEIEEVVCKSLIPIKDSLKIEYPNDELYKVHLQSKDSPIPTPSSFKSIIYENDFFHSALNIPEDLFKYISTLFYKDIIKRCPEININKINSHSVNEIISSFSKISKHERLFRFVFETIKENGILNSLEENDDAYFEFNEVIIKSSRIISKLLFPLESDNDNEDLPQSLFQNGLMDKIYKCRYLRKKNQMISHVIKHSIKEIINNNIIIRILEFGGGTASLSVEVIEEIIALLQENPNYQVEIEYTWSDISPAFIADAKNKINKIINDAAITNGFNVIYRPLKIDESLIETQSINPSYYDFVIMSNVLHVVKNIKQAVEQMYQLLTPNGQLLFLEPPYKSVLNDSIVGSFEQWWSFTDTDIRKDRCSMSQQSWCQLLKTCNFKDIAMSKECIFVGIVIHAQKPPISLLNSQPKRDNIIIYGGGNPIFVENIKLYSNSKSLIQIETIQEFNQLLSQSTITNDSIIYFIKTLETLSLDNFKQITLEYIEINRKLLQINSLCKHVLIVSDSRKTNYLASSVVGAARYFDEFQQLKLNTLDFDYDSTQNYINSNNKDMVQFINILTDSKTNVHKEMIIINNKVYYEIVQKEKNLKLKYNSESFENQNNLMCSLSPNLEYQLQSKQIKLRDNQVEVKTIATGINYKDYLNFSGSNSNGDDNTGLPQFGYEFSGIITRVGNNVKDYKVGDNVFGLSNSCTSSHIVTNYKKIQIKPSNLSHNEASSIPIDYLTSFMSLFNIGSLNIEDNESILIHLGSDGFGLSTFEILKWKGFNSNLFVTVNSYETKRYLQDNYGDFITGIYSNTDKSYVTEINKKLIKLGSKKKGVDLILNTLPSDFMDSNFKLLAKYGRIIDLTSNHLNQSEFLKNINFKYNHGYHNFELSLIQKNKIHKCLYEISNAFENGELKTIPIKEFTNLNIKDAIKYITNNKIEKITVSHDHEIYSDIIYRSLDEKEFSILKSNYQINSNNLGKNILVTGQSGIILEILKWIIKYSNINTIENVIILSRSSLKWELELLINETKLSNNNIKFHFKSVDIGDSEQVDNAINEILNENQQITNIDSIYHFAFQQITCKVQEINMKHLDISHGAKSMGAINLHNQSIKRNWKLINFVMASSAISLIGSTDLCTYVCANALLDSFSKYRESLGLPSTCICLGAIESTGFVSKNESVSVFLDGGGFHPTPINQVLGLLDLQIQNAGKFTNSMLSNFKPSKFKNNQQTSLFLKFDYLMNLKNNSEETKIENTGNKNIDELFIEKVSELFSMDESKINKNLRLIDYGADSLIIVQLKNWIDKEIGINLITIQQLQNNTISTSMKMILNSLMKNNQNIDDNNKDLPSNRIDYWKNEMKFEESIKPISNEIQSRNNSEKIILLTGTTGFLGGFLLFNMVRLDSCKLIYCLIRNKSKSNNPLDEIINNLKYHQLYEKLNQSQISKIIPIIGDLSMNKLGLSNDDYETISKNVNLIINPGADINQKSSYQDCKLVNVNGVKEIIKLSLSSLKQRIPIVNFSSFSVFFNQSLDKNFDESVLPSIDNIDNLPTEYMKSKVVGEYILLEASKKYNIPSILIRPPSIFLNPETGIGHISDFSLLSIQSCYELGYYPNQFENDFILINTITWLSNNITNIIMNDNCWTDSKMNIYNVHGKQIQSSLIIKPLEKHFNCKHINTNDWIDMVNNSNKKSCIKLKSFHSLDIILKSENNRYKPNENQSISLSTKSLLESMGSYNTDLEITDKMIISHINQIFNLNETI</sequence>
<reference key="1">
    <citation type="journal article" date="2002" name="Nature">
        <title>Sequence and analysis of chromosome 2 of Dictyostelium discoideum.</title>
        <authorList>
            <person name="Gloeckner G."/>
            <person name="Eichinger L."/>
            <person name="Szafranski K."/>
            <person name="Pachebat J.A."/>
            <person name="Bankier A.T."/>
            <person name="Dear P.H."/>
            <person name="Lehmann R."/>
            <person name="Baumgart C."/>
            <person name="Parra G."/>
            <person name="Abril J.F."/>
            <person name="Guigo R."/>
            <person name="Kumpf K."/>
            <person name="Tunggal B."/>
            <person name="Cox E.C."/>
            <person name="Quail M.A."/>
            <person name="Platzer M."/>
            <person name="Rosenthal A."/>
            <person name="Noegel A.A."/>
        </authorList>
    </citation>
    <scope>NUCLEOTIDE SEQUENCE [LARGE SCALE GENOMIC DNA]</scope>
    <source>
        <strain>AX4</strain>
    </source>
</reference>
<reference key="2">
    <citation type="journal article" date="2005" name="Nature">
        <title>The genome of the social amoeba Dictyostelium discoideum.</title>
        <authorList>
            <person name="Eichinger L."/>
            <person name="Pachebat J.A."/>
            <person name="Gloeckner G."/>
            <person name="Rajandream M.A."/>
            <person name="Sucgang R."/>
            <person name="Berriman M."/>
            <person name="Song J."/>
            <person name="Olsen R."/>
            <person name="Szafranski K."/>
            <person name="Xu Q."/>
            <person name="Tunggal B."/>
            <person name="Kummerfeld S."/>
            <person name="Madera M."/>
            <person name="Konfortov B.A."/>
            <person name="Rivero F."/>
            <person name="Bankier A.T."/>
            <person name="Lehmann R."/>
            <person name="Hamlin N."/>
            <person name="Davies R."/>
            <person name="Gaudet P."/>
            <person name="Fey P."/>
            <person name="Pilcher K."/>
            <person name="Chen G."/>
            <person name="Saunders D."/>
            <person name="Sodergren E.J."/>
            <person name="Davis P."/>
            <person name="Kerhornou A."/>
            <person name="Nie X."/>
            <person name="Hall N."/>
            <person name="Anjard C."/>
            <person name="Hemphill L."/>
            <person name="Bason N."/>
            <person name="Farbrother P."/>
            <person name="Desany B."/>
            <person name="Just E."/>
            <person name="Morio T."/>
            <person name="Rost R."/>
            <person name="Churcher C.M."/>
            <person name="Cooper J."/>
            <person name="Haydock S."/>
            <person name="van Driessche N."/>
            <person name="Cronin A."/>
            <person name="Goodhead I."/>
            <person name="Muzny D.M."/>
            <person name="Mourier T."/>
            <person name="Pain A."/>
            <person name="Lu M."/>
            <person name="Harper D."/>
            <person name="Lindsay R."/>
            <person name="Hauser H."/>
            <person name="James K.D."/>
            <person name="Quiles M."/>
            <person name="Madan Babu M."/>
            <person name="Saito T."/>
            <person name="Buchrieser C."/>
            <person name="Wardroper A."/>
            <person name="Felder M."/>
            <person name="Thangavelu M."/>
            <person name="Johnson D."/>
            <person name="Knights A."/>
            <person name="Loulseged H."/>
            <person name="Mungall K.L."/>
            <person name="Oliver K."/>
            <person name="Price C."/>
            <person name="Quail M.A."/>
            <person name="Urushihara H."/>
            <person name="Hernandez J."/>
            <person name="Rabbinowitsch E."/>
            <person name="Steffen D."/>
            <person name="Sanders M."/>
            <person name="Ma J."/>
            <person name="Kohara Y."/>
            <person name="Sharp S."/>
            <person name="Simmonds M.N."/>
            <person name="Spiegler S."/>
            <person name="Tivey A."/>
            <person name="Sugano S."/>
            <person name="White B."/>
            <person name="Walker D."/>
            <person name="Woodward J.R."/>
            <person name="Winckler T."/>
            <person name="Tanaka Y."/>
            <person name="Shaulsky G."/>
            <person name="Schleicher M."/>
            <person name="Weinstock G.M."/>
            <person name="Rosenthal A."/>
            <person name="Cox E.C."/>
            <person name="Chisholm R.L."/>
            <person name="Gibbs R.A."/>
            <person name="Loomis W.F."/>
            <person name="Platzer M."/>
            <person name="Kay R.R."/>
            <person name="Williams J.G."/>
            <person name="Dear P.H."/>
            <person name="Noegel A.A."/>
            <person name="Barrell B.G."/>
            <person name="Kuspa A."/>
        </authorList>
    </citation>
    <scope>NUCLEOTIDE SEQUENCE [LARGE SCALE GENOMIC DNA]</scope>
    <source>
        <strain>AX4</strain>
    </source>
</reference>
<reference key="3">
    <citation type="journal article" date="2003" name="Eukaryot. Cell">
        <title>Changing patterns of gene expression in Dictyostelium prestalk cell subtypes recognized by in situ hybridization with genes from microarray analyses.</title>
        <authorList>
            <person name="Maeda M."/>
            <person name="Sakamoto H."/>
            <person name="Iranfar N."/>
            <person name="Fuller D."/>
            <person name="Maruo T."/>
            <person name="Ogihara S."/>
            <person name="Morio T."/>
            <person name="Urushihara H."/>
            <person name="Tanaka Y."/>
            <person name="Loomis W.F."/>
        </authorList>
    </citation>
    <scope>DEVELOPMENTAL STAGE</scope>
</reference>
<reference key="4">
    <citation type="journal article" date="2007" name="Bioinformatics">
        <title>Polyketide synthase genes and the natural products potential of Dictyostelium discoideum.</title>
        <authorList>
            <person name="Zucko J."/>
            <person name="Skunca N."/>
            <person name="Curk T."/>
            <person name="Zupan B."/>
            <person name="Long P.F."/>
            <person name="Cullum J."/>
            <person name="Kessin R.H."/>
            <person name="Hranueli D."/>
        </authorList>
    </citation>
    <scope>IDENTIFICATION</scope>
</reference>
<keyword id="KW-0472">Membrane</keyword>
<keyword id="KW-0596">Phosphopantetheine</keyword>
<keyword id="KW-0597">Phosphoprotein</keyword>
<keyword id="KW-1185">Reference proteome</keyword>
<keyword id="KW-0808">Transferase</keyword>
<keyword id="KW-0812">Transmembrane</keyword>
<keyword id="KW-1133">Transmembrane helix</keyword>
<organism>
    <name type="scientific">Dictyostelium discoideum</name>
    <name type="common">Social amoeba</name>
    <dbReference type="NCBI Taxonomy" id="44689"/>
    <lineage>
        <taxon>Eukaryota</taxon>
        <taxon>Amoebozoa</taxon>
        <taxon>Evosea</taxon>
        <taxon>Eumycetozoa</taxon>
        <taxon>Dictyostelia</taxon>
        <taxon>Dictyosteliales</taxon>
        <taxon>Dictyosteliaceae</taxon>
        <taxon>Dictyostelium</taxon>
    </lineage>
</organism>
<evidence type="ECO:0000250" key="1"/>
<evidence type="ECO:0000255" key="2"/>
<evidence type="ECO:0000255" key="3">
    <source>
        <dbReference type="PROSITE-ProRule" id="PRU00258"/>
    </source>
</evidence>
<evidence type="ECO:0000255" key="4">
    <source>
        <dbReference type="PROSITE-ProRule" id="PRU01348"/>
    </source>
</evidence>
<evidence type="ECO:0000255" key="5">
    <source>
        <dbReference type="PROSITE-ProRule" id="PRU01363"/>
    </source>
</evidence>
<evidence type="ECO:0000255" key="6">
    <source>
        <dbReference type="PROSITE-ProRule" id="PRU10022"/>
    </source>
</evidence>
<evidence type="ECO:0000269" key="7">
    <source>
    </source>
</evidence>
<evidence type="ECO:0000305" key="8"/>
<name>PKS9_DICDI</name>
<comment type="function">
    <text evidence="1">Probable polyketide synthase.</text>
</comment>
<comment type="cofactor">
    <cofactor evidence="1">
        <name>pantetheine 4'-phosphate</name>
        <dbReference type="ChEBI" id="CHEBI:47942"/>
    </cofactor>
    <text evidence="1">Binds 1 phosphopantetheine covalently.</text>
</comment>
<comment type="subcellular location">
    <subcellularLocation>
        <location evidence="8">Membrane</location>
        <topology evidence="8">Multi-pass membrane protein</topology>
    </subcellularLocation>
</comment>
<comment type="developmental stage">
    <text evidence="7">Enriched 2.5 fold in prestalk cells.</text>
</comment>
<comment type="domain">
    <text evidence="1">Modular protein that is responsible for the completion of one condensation-processing cycle. The beta-ketoacyl synthase region is responsible for the actual condensation reaction while the acyl/malonyl transferase region is responsible for incorporating carboxylic acids units onto an acyl carrier protein (ACP) domain (By similarity).</text>
</comment>
<comment type="miscellaneous">
    <text>Encoded by one of the numerous copies of polyketide synthase genes and clustered as a quintuplet pks5/pks6/pks7/pks8/pks9 in chromosome 2.</text>
</comment>
<accession>Q86AE3</accession>
<accession>Q55AX7</accession>
<protein>
    <recommendedName>
        <fullName>Probable polyketide synthase 9/36</fullName>
        <shortName>dipks36</shortName>
        <shortName>dipks9</shortName>
        <ecNumber>2.3.1.-</ecNumber>
    </recommendedName>
</protein>